<gene>
    <name type="ordered locus">lpp2857</name>
</gene>
<reference key="1">
    <citation type="journal article" date="2004" name="Nat. Genet.">
        <title>Evidence in the Legionella pneumophila genome for exploitation of host cell functions and high genome plasticity.</title>
        <authorList>
            <person name="Cazalet C."/>
            <person name="Rusniok C."/>
            <person name="Brueggemann H."/>
            <person name="Zidane N."/>
            <person name="Magnier A."/>
            <person name="Ma L."/>
            <person name="Tichit M."/>
            <person name="Jarraud S."/>
            <person name="Bouchier C."/>
            <person name="Vandenesch F."/>
            <person name="Kunst F."/>
            <person name="Etienne J."/>
            <person name="Glaser P."/>
            <person name="Buchrieser C."/>
        </authorList>
    </citation>
    <scope>NUCLEOTIDE SEQUENCE [LARGE SCALE GENOMIC DNA]</scope>
    <source>
        <strain>Paris</strain>
    </source>
</reference>
<organism>
    <name type="scientific">Legionella pneumophila (strain Paris)</name>
    <dbReference type="NCBI Taxonomy" id="297246"/>
    <lineage>
        <taxon>Bacteria</taxon>
        <taxon>Pseudomonadati</taxon>
        <taxon>Pseudomonadota</taxon>
        <taxon>Gammaproteobacteria</taxon>
        <taxon>Legionellales</taxon>
        <taxon>Legionellaceae</taxon>
        <taxon>Legionella</taxon>
    </lineage>
</organism>
<proteinExistence type="inferred from homology"/>
<dbReference type="EMBL" id="CR628336">
    <property type="protein sequence ID" value="CAH14010.1"/>
    <property type="molecule type" value="Genomic_DNA"/>
</dbReference>
<dbReference type="RefSeq" id="WP_015961819.1">
    <property type="nucleotide sequence ID" value="NC_006368.1"/>
</dbReference>
<dbReference type="SMR" id="Q5X186"/>
<dbReference type="KEGG" id="lpp:lpp2857"/>
<dbReference type="LegioList" id="lpp2857"/>
<dbReference type="HOGENOM" id="CLU_049702_0_0_6"/>
<dbReference type="HAMAP" id="MF_01232">
    <property type="entry name" value="UPF0229"/>
    <property type="match status" value="1"/>
</dbReference>
<dbReference type="InterPro" id="IPR006698">
    <property type="entry name" value="UPF0229"/>
</dbReference>
<dbReference type="InterPro" id="IPR036465">
    <property type="entry name" value="vWFA_dom_sf"/>
</dbReference>
<dbReference type="NCBIfam" id="NF003707">
    <property type="entry name" value="PRK05325.1-2"/>
    <property type="match status" value="1"/>
</dbReference>
<dbReference type="NCBIfam" id="NF003708">
    <property type="entry name" value="PRK05325.1-3"/>
    <property type="match status" value="1"/>
</dbReference>
<dbReference type="PANTHER" id="PTHR30510">
    <property type="entry name" value="UPF0229 PROTEIN YEAH"/>
    <property type="match status" value="1"/>
</dbReference>
<dbReference type="PANTHER" id="PTHR30510:SF2">
    <property type="entry name" value="UPF0229 PROTEIN YEAH"/>
    <property type="match status" value="1"/>
</dbReference>
<dbReference type="Pfam" id="PF04285">
    <property type="entry name" value="DUF444"/>
    <property type="match status" value="1"/>
</dbReference>
<dbReference type="SUPFAM" id="SSF53300">
    <property type="entry name" value="vWA-like"/>
    <property type="match status" value="1"/>
</dbReference>
<comment type="similarity">
    <text evidence="1">Belongs to the UPF0229 family.</text>
</comment>
<protein>
    <recommendedName>
        <fullName evidence="1">UPF0229 protein lpp2857</fullName>
    </recommendedName>
</protein>
<feature type="chain" id="PRO_1000066862" description="UPF0229 protein lpp2857">
    <location>
        <begin position="1"/>
        <end position="421"/>
    </location>
</feature>
<feature type="region of interest" description="Disordered" evidence="2">
    <location>
        <begin position="83"/>
        <end position="110"/>
    </location>
</feature>
<feature type="compositionally biased region" description="Gly residues" evidence="2">
    <location>
        <begin position="92"/>
        <end position="101"/>
    </location>
</feature>
<evidence type="ECO:0000255" key="1">
    <source>
        <dbReference type="HAMAP-Rule" id="MF_01232"/>
    </source>
</evidence>
<evidence type="ECO:0000256" key="2">
    <source>
        <dbReference type="SAM" id="MobiDB-lite"/>
    </source>
</evidence>
<sequence>MSQLIDRRQNAGKKSTVNRQRFLRRYKSQIKKAVSEAVGKRSITEIDQGEQITIPAKDIYEPQFHRGHGGHIERVLPGNDNFIAGDRIKRPSGGGAGGAGGNASDSGEGEDNFVFELSREEFLELYFEDLELPDLVKKELARISTYKTVRAGVTTSGIPNNINVLRSMKQATGRRVALASPYKRRLKEAEEELERLKQLANPDKIDLLKLERDIEFFKKKIQTVPFIDTIDLRYNHRVRVPSPSTQAVMFCVMDVSGSMDEAKKDIAKRFFILLYMFLTKNYEKIELVFIRHHTSAKEVNEEEFFYSRETGGTVVSSALELLNTIIEARYPPQAWNIYVAQASDGDNWNADSPYCQELLQEKIMPLLQYFAYIEIMPRHHQSLWEVYQQVKERYPNFAMENIDNVADIYPVFRELFKRKTV</sequence>
<accession>Q5X186</accession>
<name>Y2857_LEGPA</name>